<dbReference type="EMBL" id="AF041105">
    <property type="protein sequence ID" value="AAC32804.1"/>
    <property type="molecule type" value="mRNA"/>
</dbReference>
<dbReference type="EMBL" id="AF083469">
    <property type="protein sequence ID" value="AAG36719.1"/>
    <property type="molecule type" value="mRNA"/>
</dbReference>
<dbReference type="RefSeq" id="NP_110465.1">
    <property type="nucleotide sequence ID" value="NM_030838.1"/>
</dbReference>
<dbReference type="RefSeq" id="XP_006237704.1">
    <property type="nucleotide sequence ID" value="XM_006237642.2"/>
</dbReference>
<dbReference type="RefSeq" id="XP_006237705.1">
    <property type="nucleotide sequence ID" value="XM_006237643.2"/>
</dbReference>
<dbReference type="RefSeq" id="XP_006237708.1">
    <property type="nucleotide sequence ID" value="XM_006237646.2"/>
</dbReference>
<dbReference type="RefSeq" id="XP_008761654.1">
    <property type="nucleotide sequence ID" value="XM_008763432.1"/>
</dbReference>
<dbReference type="RefSeq" id="XP_017448393.1">
    <property type="nucleotide sequence ID" value="XM_017592904.1"/>
</dbReference>
<dbReference type="RefSeq" id="XP_017448394.1">
    <property type="nucleotide sequence ID" value="XM_017592905.1"/>
</dbReference>
<dbReference type="RefSeq" id="XP_063142801.1">
    <property type="nucleotide sequence ID" value="XM_063286731.1"/>
</dbReference>
<dbReference type="RefSeq" id="XP_063142802.1">
    <property type="nucleotide sequence ID" value="XM_063286732.1"/>
</dbReference>
<dbReference type="RefSeq" id="XP_063142803.1">
    <property type="nucleotide sequence ID" value="XM_063286733.1"/>
</dbReference>
<dbReference type="RefSeq" id="XP_063142804.1">
    <property type="nucleotide sequence ID" value="XM_063286734.1"/>
</dbReference>
<dbReference type="RefSeq" id="XP_063142805.1">
    <property type="nucleotide sequence ID" value="XM_063286735.1"/>
</dbReference>
<dbReference type="RefSeq" id="XP_063142806.1">
    <property type="nucleotide sequence ID" value="XM_063286736.1"/>
</dbReference>
<dbReference type="SMR" id="O88397"/>
<dbReference type="STRING" id="10116.ENSRNOP00000048288"/>
<dbReference type="ChEMBL" id="CHEMBL2073692"/>
<dbReference type="TCDB" id="2.A.60.1.3">
    <property type="family name" value="the organo anion transporter (oat) family"/>
</dbReference>
<dbReference type="GlyCosmos" id="O88397">
    <property type="glycosylation" value="4 sites, No reported glycans"/>
</dbReference>
<dbReference type="GlyGen" id="O88397">
    <property type="glycosylation" value="4 sites"/>
</dbReference>
<dbReference type="PhosphoSitePlus" id="O88397"/>
<dbReference type="PaxDb" id="10116-ENSRNOP00000048288"/>
<dbReference type="GeneID" id="80900"/>
<dbReference type="KEGG" id="rno:80900"/>
<dbReference type="UCSC" id="RGD:70985">
    <property type="organism name" value="rat"/>
</dbReference>
<dbReference type="AGR" id="RGD:70985"/>
<dbReference type="CTD" id="108096"/>
<dbReference type="RGD" id="70985">
    <property type="gene designation" value="Slco1a5"/>
</dbReference>
<dbReference type="VEuPathDB" id="HostDB:ENSRNOG00000047493"/>
<dbReference type="eggNOG" id="KOG3626">
    <property type="taxonomic scope" value="Eukaryota"/>
</dbReference>
<dbReference type="HOGENOM" id="CLU_008954_4_0_1"/>
<dbReference type="InParanoid" id="O88397"/>
<dbReference type="OrthoDB" id="5062115at2759"/>
<dbReference type="PhylomeDB" id="O88397"/>
<dbReference type="TreeFam" id="TF317540"/>
<dbReference type="PRO" id="PR:O88397"/>
<dbReference type="Proteomes" id="UP000002494">
    <property type="component" value="Chromosome 4"/>
</dbReference>
<dbReference type="Bgee" id="ENSRNOG00000031249">
    <property type="expression patterns" value="Expressed in lung and 6 other cell types or tissues"/>
</dbReference>
<dbReference type="GO" id="GO:0009925">
    <property type="term" value="C:basal plasma membrane"/>
    <property type="evidence" value="ECO:0000250"/>
    <property type="project" value="UniProtKB"/>
</dbReference>
<dbReference type="GO" id="GO:0016323">
    <property type="term" value="C:basolateral plasma membrane"/>
    <property type="evidence" value="ECO:0000318"/>
    <property type="project" value="GO_Central"/>
</dbReference>
<dbReference type="GO" id="GO:0031526">
    <property type="term" value="C:brush border membrane"/>
    <property type="evidence" value="ECO:0000314"/>
    <property type="project" value="RGD"/>
</dbReference>
<dbReference type="GO" id="GO:0015125">
    <property type="term" value="F:bile acid transmembrane transporter activity"/>
    <property type="evidence" value="ECO:0000314"/>
    <property type="project" value="RGD"/>
</dbReference>
<dbReference type="GO" id="GO:0008028">
    <property type="term" value="F:monocarboxylic acid transmembrane transporter activity"/>
    <property type="evidence" value="ECO:0000314"/>
    <property type="project" value="RGD"/>
</dbReference>
<dbReference type="GO" id="GO:0008514">
    <property type="term" value="F:organic anion transmembrane transporter activity"/>
    <property type="evidence" value="ECO:0000314"/>
    <property type="project" value="UniProtKB"/>
</dbReference>
<dbReference type="GO" id="GO:0015347">
    <property type="term" value="F:sodium-independent organic anion transmembrane transporter activity"/>
    <property type="evidence" value="ECO:0000318"/>
    <property type="project" value="GO_Central"/>
</dbReference>
<dbReference type="GO" id="GO:0015349">
    <property type="term" value="F:thyroid hormone transmembrane transporter activity"/>
    <property type="evidence" value="ECO:0000314"/>
    <property type="project" value="RGD"/>
</dbReference>
<dbReference type="GO" id="GO:0015721">
    <property type="term" value="P:bile acid and bile salt transport"/>
    <property type="evidence" value="ECO:0000314"/>
    <property type="project" value="RGD"/>
</dbReference>
<dbReference type="GO" id="GO:0050892">
    <property type="term" value="P:intestinal absorption"/>
    <property type="evidence" value="ECO:0000315"/>
    <property type="project" value="RGD"/>
</dbReference>
<dbReference type="GO" id="GO:0097421">
    <property type="term" value="P:liver regeneration"/>
    <property type="evidence" value="ECO:0000270"/>
    <property type="project" value="RGD"/>
</dbReference>
<dbReference type="GO" id="GO:0006811">
    <property type="term" value="P:monoatomic ion transport"/>
    <property type="evidence" value="ECO:0007669"/>
    <property type="project" value="UniProtKB-KW"/>
</dbReference>
<dbReference type="GO" id="GO:0015718">
    <property type="term" value="P:monocarboxylic acid transport"/>
    <property type="evidence" value="ECO:0000315"/>
    <property type="project" value="RGD"/>
</dbReference>
<dbReference type="GO" id="GO:0015711">
    <property type="term" value="P:organic anion transport"/>
    <property type="evidence" value="ECO:0000314"/>
    <property type="project" value="RGD"/>
</dbReference>
<dbReference type="GO" id="GO:0043252">
    <property type="term" value="P:sodium-independent organic anion transport"/>
    <property type="evidence" value="ECO:0000318"/>
    <property type="project" value="GO_Central"/>
</dbReference>
<dbReference type="FunFam" id="1.20.1250.20:FF:000210">
    <property type="entry name" value="Solute carrier organic anion transporter family member"/>
    <property type="match status" value="1"/>
</dbReference>
<dbReference type="Gene3D" id="1.20.1250.20">
    <property type="entry name" value="MFS general substrate transporter like domains"/>
    <property type="match status" value="1"/>
</dbReference>
<dbReference type="InterPro" id="IPR002350">
    <property type="entry name" value="Kazal_dom"/>
</dbReference>
<dbReference type="InterPro" id="IPR036058">
    <property type="entry name" value="Kazal_dom_sf"/>
</dbReference>
<dbReference type="InterPro" id="IPR020846">
    <property type="entry name" value="MFS_dom"/>
</dbReference>
<dbReference type="InterPro" id="IPR036259">
    <property type="entry name" value="MFS_trans_sf"/>
</dbReference>
<dbReference type="InterPro" id="IPR004156">
    <property type="entry name" value="OATP"/>
</dbReference>
<dbReference type="NCBIfam" id="TIGR00805">
    <property type="entry name" value="oat"/>
    <property type="match status" value="1"/>
</dbReference>
<dbReference type="PANTHER" id="PTHR11388">
    <property type="entry name" value="ORGANIC ANION TRANSPORTER"/>
    <property type="match status" value="1"/>
</dbReference>
<dbReference type="PANTHER" id="PTHR11388:SF148">
    <property type="entry name" value="SOLUTE CARRIER ORGANIC ANION TRANSPORTER FAMILY MEMBER-RELATED"/>
    <property type="match status" value="1"/>
</dbReference>
<dbReference type="Pfam" id="PF07648">
    <property type="entry name" value="Kazal_2"/>
    <property type="match status" value="1"/>
</dbReference>
<dbReference type="Pfam" id="PF03137">
    <property type="entry name" value="OATP"/>
    <property type="match status" value="1"/>
</dbReference>
<dbReference type="SUPFAM" id="SSF100895">
    <property type="entry name" value="Kazal-type serine protease inhibitors"/>
    <property type="match status" value="1"/>
</dbReference>
<dbReference type="SUPFAM" id="SSF103473">
    <property type="entry name" value="MFS general substrate transporter"/>
    <property type="match status" value="1"/>
</dbReference>
<dbReference type="PROSITE" id="PS51465">
    <property type="entry name" value="KAZAL_2"/>
    <property type="match status" value="1"/>
</dbReference>
<dbReference type="PROSITE" id="PS50850">
    <property type="entry name" value="MFS"/>
    <property type="match status" value="1"/>
</dbReference>
<comment type="function">
    <text evidence="1 2 5 6 7">Na(+)-independent transporter that mediates the cellular uptake of a broad range of organic anions such as the endogenous bile salts cholate and deoxycholate, either in their unconjugated or conjugated forms (taurocholate and glycocholate), estrone 3-sulfate and prostaglandin E2, at the plasma membrane (PubMed:11093941, PubMed:19129463, PubMed:9712861). Responsible for intestinal absorption of bile acids (PubMed:11093941). Capable of thyroid hormone transport (both T3 or 3,3',5'-triiodo-L-thyronine, and T4 or L-tyroxine) (PubMed:19129463, PubMed:9712861). Plays roles in blood-brain and -cerebrospinal fluid barrier transport of organic anions and signal mediators, and in hormone uptake by neural cells (By similarity). May also play a role in the reuptake of neuropeptides such as substance P/TAC1 and vasoactive intestinal peptide/VIP released from retinal neurons (By similarity). Shows a pH-sensitive substrate specificity which may be ascribed to the protonation state of the binding site and leads to a stimulation of substrate transport in an acidic microenvironment (PubMed:19129463). Hydrogencarbonate/HCO3(-) acts as the probable counteranion that exchanges for organic anions (PubMed:19129463). May contribute to regulate the transport of organic compounds in testis across the blood-testis-barrier (By similarity).</text>
</comment>
<comment type="catalytic activity">
    <reaction evidence="5 7 9">
        <text>taurocholate(out) = taurocholate(in)</text>
        <dbReference type="Rhea" id="RHEA:71703"/>
        <dbReference type="ChEBI" id="CHEBI:36257"/>
    </reaction>
</comment>
<comment type="catalytic activity">
    <reaction evidence="5">
        <text>glycocholate(out) = glycocholate(in)</text>
        <dbReference type="Rhea" id="RHEA:71851"/>
        <dbReference type="ChEBI" id="CHEBI:29746"/>
    </reaction>
</comment>
<comment type="catalytic activity">
    <reaction evidence="5">
        <text>taurochenodeoxycholate(out) = taurochenodeoxycholate(in)</text>
        <dbReference type="Rhea" id="RHEA:71855"/>
        <dbReference type="ChEBI" id="CHEBI:9407"/>
    </reaction>
</comment>
<comment type="catalytic activity">
    <reaction evidence="5">
        <text>tauroursodeoxycholate(out) = tauroursodeoxycholate(in)</text>
        <dbReference type="Rhea" id="RHEA:71843"/>
        <dbReference type="ChEBI" id="CHEBI:132028"/>
    </reaction>
</comment>
<comment type="catalytic activity">
    <reaction evidence="7">
        <text>3,3',5'-triiodo-L-thyronine(out) = 3,3',5'-triiodo-L-thyronine(in)</text>
        <dbReference type="Rhea" id="RHEA:71815"/>
        <dbReference type="ChEBI" id="CHEBI:57261"/>
    </reaction>
</comment>
<comment type="catalytic activity">
    <reaction evidence="7 9">
        <text>L-thyroxine(out) = L-thyroxine(in)</text>
        <dbReference type="Rhea" id="RHEA:71819"/>
        <dbReference type="ChEBI" id="CHEBI:58448"/>
    </reaction>
</comment>
<comment type="catalytic activity">
    <reaction evidence="5">
        <text>taurodeoxycholate(out) = taurodeoxycholate(in)</text>
        <dbReference type="Rhea" id="RHEA:71863"/>
        <dbReference type="ChEBI" id="CHEBI:36261"/>
    </reaction>
</comment>
<comment type="catalytic activity">
    <reaction evidence="5">
        <text>glycodeoxycholate(out) = glycodeoxycholate(in)</text>
        <dbReference type="Rhea" id="RHEA:71867"/>
        <dbReference type="ChEBI" id="CHEBI:82982"/>
    </reaction>
</comment>
<comment type="catalytic activity">
    <reaction evidence="5">
        <text>glycochenodeoxycholate(out) = glycochenodeoxycholate(in)</text>
        <dbReference type="Rhea" id="RHEA:71859"/>
        <dbReference type="ChEBI" id="CHEBI:36252"/>
    </reaction>
</comment>
<comment type="catalytic activity">
    <reaction evidence="5">
        <text>glycoursodeoxycholate(out) = glycoursodeoxycholate(in)</text>
        <dbReference type="Rhea" id="RHEA:71847"/>
        <dbReference type="ChEBI" id="CHEBI:132030"/>
    </reaction>
</comment>
<comment type="catalytic activity">
    <reaction evidence="9">
        <text>estrone 3-sulfate(out) = estrone 3-sulfate(in)</text>
        <dbReference type="Rhea" id="RHEA:71835"/>
        <dbReference type="ChEBI" id="CHEBI:60050"/>
    </reaction>
</comment>
<comment type="catalytic activity">
    <reaction evidence="9">
        <text>prostaglandin E2(out) = prostaglandin E2(in)</text>
        <dbReference type="Rhea" id="RHEA:50984"/>
        <dbReference type="ChEBI" id="CHEBI:606564"/>
    </reaction>
</comment>
<comment type="catalytic activity">
    <reaction evidence="1">
        <text>substance P(out) = substance P(in)</text>
        <dbReference type="Rhea" id="RHEA:74367"/>
        <dbReference type="ChEBI" id="CHEBI:190692"/>
    </reaction>
</comment>
<comment type="biophysicochemical properties">
    <kinetics>
        <KM evidence="7">17.99 uM for taurocholate</KM>
        <KM evidence="5">20.9 uM for taurocholate</KM>
        <KM evidence="7">4.93 uM for L-thyroxine</KM>
        <KM evidence="7">7.33 uM for 3,3',5'-triiodo-L-thyronine</KM>
        <KM evidence="5">8.8 uM for cholate</KM>
        <KM evidence="5">15.4 uM for glycocholate</KM>
        <KM evidence="5">5.8 uM for taurodeoxycholate</KM>
        <KM evidence="5">4.3 uM for glycodeoxycholate</KM>
        <KM evidence="5">7 uM for taurochenodeoxycholate</KM>
        <KM evidence="5">6.6 uM for tauroursodeoxycholate</KM>
        <KM evidence="5">5.6 uM for glycochenodeoxycholate</KM>
        <KM evidence="5">5.3 uM for glycoursodeoxycholate</KM>
        <KM evidence="6">83.5 uM for estrone 3-sulfate (at pH 6.5)</KM>
        <KM evidence="6">177 uM for estrone 3-sulfate (at pH 8.0)</KM>
        <KM evidence="6">8.5 uM for taurocholate (at pH 6.5)</KM>
        <KM evidence="6">18.2 uM for taurocholate (at pH 8.0)</KM>
        <KM evidence="6">56.8 uM for prostaglandin E2 (at pH 6.5)</KM>
        <KM evidence="6">108 uM for prostaglandin E2 (at pH 8.0)</KM>
        <Vmax evidence="5">38.7 pmol/min/mg protein for cholate</Vmax>
        <Vmax evidence="5">110.6 pmol/min/mg protein for taurocholate</Vmax>
        <Vmax evidence="5">56.7 pmol/min/mg protein for taurodeoxycholate</Vmax>
        <Vmax evidence="5">65.5 pmol/min/mg protein for glycodeoxycholate</Vmax>
        <Vmax evidence="5">106.7 pmol/min/mg protein for taurochenodeoxycholate</Vmax>
        <Vmax evidence="5">120.2 pmol/min/mg protein for glycochenodeoxycholate</Vmax>
        <Vmax evidence="5">43.6 pmol/min/mg protein for tauroursodeoxycholate</Vmax>
        <Vmax evidence="5">44.2 pmol/min/mg protein for glycoursodeoxycholate</Vmax>
        <Vmax evidence="6">383.0 pmol/min/mg enzyme with estrone 3-sulfate as substrate (at pH 6.5)</Vmax>
        <Vmax evidence="6">453.0 pmol/min/mg enzyme with estrone 3-sulfate as substrate (at pH 8.0)</Vmax>
        <Vmax evidence="6">55.1 pmol/min/mg enzyme with taurocholate as substrate (at pH 6.5)</Vmax>
        <Vmax evidence="6">46.6 pmol/min/mg enzyme with taurocholate as substrate (at pH 8.0)</Vmax>
        <Vmax evidence="6">85.1 pmol/min/mg enzyme with prostaglandin E2 as substrate (at pH 6.5)</Vmax>
        <Vmax evidence="6">98.2 pmol/min/mg enzyme with prostaglandin E2 as substrate (at pH 8.0)</Vmax>
    </kinetics>
    <phDependence>
        <text evidence="6">Optimum pH is 6.5 with estrone 3-sulfate, taurocholate, prostaglandin E2 and L-thyroxine (T4) as substrates.</text>
    </phDependence>
</comment>
<comment type="subcellular location">
    <subcellularLocation>
        <location evidence="1">Cell membrane</location>
        <topology evidence="8">Multi-pass membrane protein</topology>
    </subcellularLocation>
    <subcellularLocation>
        <location evidence="1">Basal cell membrane</location>
        <topology evidence="8">Multi-pass membrane protein</topology>
    </subcellularLocation>
</comment>
<comment type="tissue specificity">
    <text evidence="5 7">Highly expressed in the kidney, moderately abundant in the retina, and even lower in the liver (PubMed:9712861). Expressed (at protein level) in the small intestine (PubMed:11093941). Expressed at lower levels in brain,lung, and retina (PubMed:11093941).</text>
</comment>
<comment type="domain">
    <text evidence="9">A conserved histidine residue in the third TMD (His-107) may play an essential role in the pH sensitivity of SLCO1A5/OATP1A5-mediated substrate transport.</text>
</comment>
<comment type="similarity">
    <text evidence="8">Belongs to the organo anion transporter (TC 2.A.60) family.</text>
</comment>
<proteinExistence type="evidence at protein level"/>
<organism>
    <name type="scientific">Rattus norvegicus</name>
    <name type="common">Rat</name>
    <dbReference type="NCBI Taxonomy" id="10116"/>
    <lineage>
        <taxon>Eukaryota</taxon>
        <taxon>Metazoa</taxon>
        <taxon>Chordata</taxon>
        <taxon>Craniata</taxon>
        <taxon>Vertebrata</taxon>
        <taxon>Euteleostomi</taxon>
        <taxon>Mammalia</taxon>
        <taxon>Eutheria</taxon>
        <taxon>Euarchontoglires</taxon>
        <taxon>Glires</taxon>
        <taxon>Rodentia</taxon>
        <taxon>Myomorpha</taxon>
        <taxon>Muroidea</taxon>
        <taxon>Muridae</taxon>
        <taxon>Murinae</taxon>
        <taxon>Rattus</taxon>
    </lineage>
</organism>
<accession>O88397</accession>
<accession>Q9EQR8</accession>
<feature type="chain" id="PRO_0000191044" description="Solute carrier organic anion transporter family member 1A5">
    <location>
        <begin position="1"/>
        <end position="670"/>
    </location>
</feature>
<feature type="topological domain" description="Cytoplasmic" evidence="3">
    <location>
        <begin position="1"/>
        <end position="20"/>
    </location>
</feature>
<feature type="transmembrane region" description="Helical; Name=1" evidence="3">
    <location>
        <begin position="21"/>
        <end position="40"/>
    </location>
</feature>
<feature type="topological domain" description="Extracellular" evidence="3">
    <location>
        <begin position="41"/>
        <end position="59"/>
    </location>
</feature>
<feature type="transmembrane region" description="Helical; Name=2" evidence="3">
    <location>
        <begin position="60"/>
        <end position="80"/>
    </location>
</feature>
<feature type="topological domain" description="Cytoplasmic" evidence="3">
    <location>
        <begin position="81"/>
        <end position="86"/>
    </location>
</feature>
<feature type="transmembrane region" description="Helical; Name=3" evidence="3">
    <location>
        <begin position="87"/>
        <end position="111"/>
    </location>
</feature>
<feature type="topological domain" description="Extracellular" evidence="3">
    <location>
        <begin position="112"/>
        <end position="155"/>
    </location>
</feature>
<feature type="transmembrane region" description="Helical; Name=4" evidence="3">
    <location>
        <begin position="156"/>
        <end position="184"/>
    </location>
</feature>
<feature type="topological domain" description="Cytoplasmic" evidence="3">
    <location>
        <begin position="185"/>
        <end position="203"/>
    </location>
</feature>
<feature type="transmembrane region" description="Helical; Name=5" evidence="3">
    <location>
        <begin position="204"/>
        <end position="224"/>
    </location>
</feature>
<feature type="topological domain" description="Extracellular" evidence="3">
    <location>
        <begin position="225"/>
        <end position="242"/>
    </location>
</feature>
<feature type="transmembrane region" description="Helical; Name=6" evidence="3">
    <location>
        <begin position="243"/>
        <end position="267"/>
    </location>
</feature>
<feature type="topological domain" description="Cytoplasmic" evidence="3">
    <location>
        <begin position="268"/>
        <end position="311"/>
    </location>
</feature>
<feature type="transmembrane region" description="Helical; Name=7" evidence="3">
    <location>
        <begin position="312"/>
        <end position="333"/>
    </location>
</feature>
<feature type="topological domain" description="Extracellular" evidence="3">
    <location>
        <begin position="334"/>
        <end position="353"/>
    </location>
</feature>
<feature type="transmembrane region" description="Helical; Name=8" evidence="3">
    <location>
        <begin position="354"/>
        <end position="377"/>
    </location>
</feature>
<feature type="topological domain" description="Cytoplasmic" evidence="3">
    <location>
        <begin position="378"/>
        <end position="381"/>
    </location>
</feature>
<feature type="transmembrane region" description="Helical; Name=9" evidence="3">
    <location>
        <begin position="382"/>
        <end position="405"/>
    </location>
</feature>
<feature type="topological domain" description="Extracellular" evidence="3">
    <location>
        <begin position="406"/>
        <end position="513"/>
    </location>
</feature>
<feature type="transmembrane region" description="Helical; Name=10" evidence="3">
    <location>
        <begin position="514"/>
        <end position="536"/>
    </location>
</feature>
<feature type="topological domain" description="Cytoplasmic" evidence="3">
    <location>
        <begin position="537"/>
        <end position="545"/>
    </location>
</feature>
<feature type="transmembrane region" description="Helical; Name=11" evidence="3">
    <location>
        <begin position="546"/>
        <end position="571"/>
    </location>
</feature>
<feature type="topological domain" description="Extracellular" evidence="3">
    <location>
        <begin position="572"/>
        <end position="605"/>
    </location>
</feature>
<feature type="transmembrane region" description="Helical; Name=12" evidence="3">
    <location>
        <begin position="606"/>
        <end position="623"/>
    </location>
</feature>
<feature type="topological domain" description="Cytoplasmic" evidence="3">
    <location>
        <begin position="624"/>
        <end position="670"/>
    </location>
</feature>
<feature type="domain" description="Kazal-like" evidence="4">
    <location>
        <begin position="433"/>
        <end position="488"/>
    </location>
</feature>
<feature type="glycosylation site" description="N-linked (GlcNAc...) asparagine" evidence="3">
    <location>
        <position position="124"/>
    </location>
</feature>
<feature type="glycosylation site" description="N-linked (GlcNAc...) asparagine" evidence="3">
    <location>
        <position position="135"/>
    </location>
</feature>
<feature type="glycosylation site" description="N-linked (GlcNAc...) asparagine" evidence="3">
    <location>
        <position position="483"/>
    </location>
</feature>
<feature type="glycosylation site" description="N-linked (GlcNAc...) asparagine" evidence="3">
    <location>
        <position position="492"/>
    </location>
</feature>
<feature type="disulfide bond" evidence="4">
    <location>
        <begin position="439"/>
        <end position="469"/>
    </location>
</feature>
<feature type="disulfide bond" evidence="4">
    <location>
        <begin position="445"/>
        <end position="465"/>
    </location>
</feature>
<feature type="disulfide bond" evidence="4">
    <location>
        <begin position="454"/>
        <end position="486"/>
    </location>
</feature>
<feature type="sequence conflict" description="In Ref. 1; AAC32804." evidence="8" ref="1">
    <original>K</original>
    <variation>Q</variation>
    <location>
        <position position="33"/>
    </location>
</feature>
<feature type="sequence conflict" description="In Ref. 1; AAC32804." evidence="8" ref="1">
    <original>T</original>
    <variation>I</variation>
    <location>
        <position position="55"/>
    </location>
</feature>
<feature type="sequence conflict" description="In Ref. 1; AAC32804." evidence="8" ref="1">
    <original>L</original>
    <variation>F</variation>
    <location>
        <position position="70"/>
    </location>
</feature>
<feature type="sequence conflict" description="In Ref. 1; AAC32804." evidence="8" ref="1">
    <original>S</original>
    <variation>L</variation>
    <location>
        <position position="421"/>
    </location>
</feature>
<feature type="sequence conflict" description="In Ref. 1; AAC32804." evidence="8" ref="1">
    <original>E</original>
    <variation>K</variation>
    <location>
        <position position="543"/>
    </location>
</feature>
<protein>
    <recommendedName>
        <fullName>Solute carrier organic anion transporter family member 1A5</fullName>
    </recommendedName>
    <alternativeName>
        <fullName>Organic anion-transporting polypeptide 3</fullName>
        <shortName>OATP-3</shortName>
    </alternativeName>
    <alternativeName>
        <fullName>Sodium-independent organic anion transporter 3</fullName>
    </alternativeName>
    <alternativeName>
        <fullName>Solute carrier family 21 member 7</fullName>
    </alternativeName>
</protein>
<gene>
    <name type="primary">Slco1a5</name>
    <name type="synonym">Oatp1a5</name>
    <name type="synonym">Oatp3</name>
    <name type="synonym">Slc21a7</name>
    <name type="synonym">Slco1a2</name>
</gene>
<name>SO1A5_RAT</name>
<evidence type="ECO:0000250" key="1">
    <source>
        <dbReference type="UniProtKB" id="P46721"/>
    </source>
</evidence>
<evidence type="ECO:0000250" key="2">
    <source>
        <dbReference type="UniProtKB" id="Q91YY5"/>
    </source>
</evidence>
<evidence type="ECO:0000255" key="3"/>
<evidence type="ECO:0000255" key="4">
    <source>
        <dbReference type="PROSITE-ProRule" id="PRU00798"/>
    </source>
</evidence>
<evidence type="ECO:0000269" key="5">
    <source>
    </source>
</evidence>
<evidence type="ECO:0000269" key="6">
    <source>
    </source>
</evidence>
<evidence type="ECO:0000269" key="7">
    <source>
    </source>
</evidence>
<evidence type="ECO:0000305" key="8"/>
<evidence type="ECO:0000305" key="9">
    <source>
    </source>
</evidence>
<reference key="1">
    <citation type="journal article" date="1998" name="J. Biol. Chem.">
        <title>Molecular characterization and tissue distribution of a new organic anion transporter subtype (oatp3) that transports thyroid hormones and taurocholate and comparison with oatp2.</title>
        <authorList>
            <person name="Abe T."/>
            <person name="Kakyo M."/>
            <person name="Sakagami H."/>
            <person name="Tokui T."/>
            <person name="Nishio T."/>
            <person name="Tanemoto M."/>
            <person name="Nomura H."/>
            <person name="Hebert S.C."/>
            <person name="Matsuno S."/>
            <person name="Kondo H."/>
            <person name="Yawo H."/>
        </authorList>
    </citation>
    <scope>NUCLEOTIDE SEQUENCE [MRNA]</scope>
    <scope>FUNCTION</scope>
    <scope>BIOPHYSICOCHEMICAL PROPERTIES</scope>
    <scope>TRANSPORTER ACTIVITY</scope>
    <scope>TISSUE SPECIFICITY</scope>
    <source>
        <tissue>Brain</tissue>
    </source>
</reference>
<reference key="2">
    <citation type="journal article" date="2000" name="Am. J. Physiol.">
        <title>Expression, transport properties, and chromosomal location of organic anion transporter subtype 3.</title>
        <authorList>
            <person name="Walters H.C."/>
            <person name="Craddock A.L."/>
            <person name="Fusegawa H."/>
            <person name="Willingham M.C."/>
            <person name="Dawson P.A."/>
        </authorList>
    </citation>
    <scope>NUCLEOTIDE SEQUENCE [MRNA]</scope>
    <scope>FUNCTION</scope>
    <scope>BIOPHYSICOCHEMICAL PROPERTIES</scope>
    <scope>TRANSPORTER ACTIVITY</scope>
    <scope>TISSUE SPECIFICITY</scope>
    <source>
        <strain>Sprague-Dawley</strain>
        <tissue>Ileum</tissue>
    </source>
</reference>
<reference key="3">
    <citation type="journal article" date="2009" name="Am. J. Physiol.">
        <title>Mechanisms of pH-gradient driven transport mediated by organic anion polypeptide transporters.</title>
        <authorList>
            <person name="Leuthold S."/>
            <person name="Hagenbuch B."/>
            <person name="Mohebbi N."/>
            <person name="Wagner C.A."/>
            <person name="Meier P.J."/>
            <person name="Stieger B."/>
        </authorList>
    </citation>
    <scope>FUNCTION</scope>
    <scope>TRANSPORTER ACTIVITY</scope>
    <scope>BIOPHYSICOCHEMICAL PROPERTIES</scope>
    <scope>DOMAIN</scope>
</reference>
<sequence>MGETEKRVATHEVRCFSKIKMFLLALTWAYVSKSLSGIYMNTMLTQIERQFDIPTSIVGFINGSFEIGNLLLIIFVSYFGTKLHRPIMIGVGCVIMGLGCFLMSLPHFLMGRYEYETTISPTSNLSSNSFLCMENRSQTLKPTQDPAECIKEMKSLMWIYVLVGNIIRGIGETPIMPLGISYIEDFAKSENSPLYIGILETGKVFGPIVGLLLGSFCASIYVDTGSVNTDDLTITPTDTRWVGAWWIGFLICAGVNILSSIPFFFFPKTLPKEGLQDDVDGTNNDKEEKHREKAKEENRGITKDFLPFMKSLSCNPIYMLLILTSVLQINAFINMFTFLPKYLEQQYGKSTAEVVLLIGVYNLPPICIGYLLIGFIMKKFKITVKKAAYMAFCLSLFEYLLYFLHFMITCDNFPVAGLTASYEGVHHPLYVENKVLADCNRGCSCSTNSWDPVCGDNGLAYMSACLAGCKKSVGTGTNMVFQNCSCIRSSGNSSAVLGLCKKGPECANKLQYFLIMSVIGSFIYSITAIPGYMVLLRCIKPEEKSLGIGLHAFCTRVFAGIPAPIYFGALIDRTCLHWGTLKCGEPGACRMYNINNFRRIYLVLPAALRGSSYLPALFILILMRKFQFPGEIDSSETELAEMKITVKKSECTDVHGSPQVENDGELKTRL</sequence>
<keyword id="KW-1003">Cell membrane</keyword>
<keyword id="KW-1015">Disulfide bond</keyword>
<keyword id="KW-0325">Glycoprotein</keyword>
<keyword id="KW-0406">Ion transport</keyword>
<keyword id="KW-0445">Lipid transport</keyword>
<keyword id="KW-0472">Membrane</keyword>
<keyword id="KW-1185">Reference proteome</keyword>
<keyword id="KW-0812">Transmembrane</keyword>
<keyword id="KW-1133">Transmembrane helix</keyword>
<keyword id="KW-0813">Transport</keyword>